<feature type="chain" id="PRO_1000064506" description="UPF0253 protein YE3262">
    <location>
        <begin position="1"/>
        <end position="66"/>
    </location>
</feature>
<evidence type="ECO:0000255" key="1">
    <source>
        <dbReference type="HAMAP-Rule" id="MF_01064"/>
    </source>
</evidence>
<proteinExistence type="inferred from homology"/>
<sequence>MQQYCELVRRFYAQIASGDQGYVSDALGCVLKALDEVAANDALPSSVREQAAFAAANLLVSDYVDE</sequence>
<dbReference type="EMBL" id="AM286415">
    <property type="protein sequence ID" value="CAL13292.1"/>
    <property type="molecule type" value="Genomic_DNA"/>
</dbReference>
<dbReference type="RefSeq" id="WP_004391680.1">
    <property type="nucleotide sequence ID" value="NC_008800.1"/>
</dbReference>
<dbReference type="RefSeq" id="YP_001007436.1">
    <property type="nucleotide sequence ID" value="NC_008800.1"/>
</dbReference>
<dbReference type="SMR" id="A1JP58"/>
<dbReference type="KEGG" id="yen:YE3262"/>
<dbReference type="PATRIC" id="fig|393305.7.peg.3470"/>
<dbReference type="eggNOG" id="ENOG5032Z3X">
    <property type="taxonomic scope" value="Bacteria"/>
</dbReference>
<dbReference type="HOGENOM" id="CLU_190008_0_0_6"/>
<dbReference type="OrthoDB" id="5900992at2"/>
<dbReference type="Proteomes" id="UP000000642">
    <property type="component" value="Chromosome"/>
</dbReference>
<dbReference type="HAMAP" id="MF_01064">
    <property type="entry name" value="UPF0253"/>
    <property type="match status" value="1"/>
</dbReference>
<dbReference type="InterPro" id="IPR009624">
    <property type="entry name" value="UPF0253"/>
</dbReference>
<dbReference type="NCBIfam" id="NF003436">
    <property type="entry name" value="PRK04964.1"/>
    <property type="match status" value="1"/>
</dbReference>
<dbReference type="Pfam" id="PF06786">
    <property type="entry name" value="UPF0253"/>
    <property type="match status" value="1"/>
</dbReference>
<accession>A1JP58</accession>
<gene>
    <name type="ordered locus">YE3262</name>
</gene>
<organism>
    <name type="scientific">Yersinia enterocolitica serotype O:8 / biotype 1B (strain NCTC 13174 / 8081)</name>
    <dbReference type="NCBI Taxonomy" id="393305"/>
    <lineage>
        <taxon>Bacteria</taxon>
        <taxon>Pseudomonadati</taxon>
        <taxon>Pseudomonadota</taxon>
        <taxon>Gammaproteobacteria</taxon>
        <taxon>Enterobacterales</taxon>
        <taxon>Yersiniaceae</taxon>
        <taxon>Yersinia</taxon>
    </lineage>
</organism>
<name>Y3262_YERE8</name>
<comment type="similarity">
    <text evidence="1">Belongs to the UPF0253 family.</text>
</comment>
<protein>
    <recommendedName>
        <fullName evidence="1">UPF0253 protein YE3262</fullName>
    </recommendedName>
</protein>
<reference key="1">
    <citation type="journal article" date="2006" name="PLoS Genet.">
        <title>The complete genome sequence and comparative genome analysis of the high pathogenicity Yersinia enterocolitica strain 8081.</title>
        <authorList>
            <person name="Thomson N.R."/>
            <person name="Howard S."/>
            <person name="Wren B.W."/>
            <person name="Holden M.T.G."/>
            <person name="Crossman L."/>
            <person name="Challis G.L."/>
            <person name="Churcher C."/>
            <person name="Mungall K."/>
            <person name="Brooks K."/>
            <person name="Chillingworth T."/>
            <person name="Feltwell T."/>
            <person name="Abdellah Z."/>
            <person name="Hauser H."/>
            <person name="Jagels K."/>
            <person name="Maddison M."/>
            <person name="Moule S."/>
            <person name="Sanders M."/>
            <person name="Whitehead S."/>
            <person name="Quail M.A."/>
            <person name="Dougan G."/>
            <person name="Parkhill J."/>
            <person name="Prentice M.B."/>
        </authorList>
    </citation>
    <scope>NUCLEOTIDE SEQUENCE [LARGE SCALE GENOMIC DNA]</scope>
    <source>
        <strain>NCTC 13174 / 8081</strain>
    </source>
</reference>